<feature type="chain" id="PRO_0000219715" description="Photosystem II reaction center protein L">
    <location>
        <begin position="1"/>
        <end position="38"/>
    </location>
</feature>
<feature type="transmembrane region" description="Helical" evidence="1">
    <location>
        <begin position="17"/>
        <end position="37"/>
    </location>
</feature>
<gene>
    <name evidence="1" type="primary">psbL</name>
</gene>
<reference key="1">
    <citation type="journal article" date="2000" name="Am. J. Bot.">
        <title>Utility of 17 chloroplast genes for inferring the phylogeny of the basal angiosperms.</title>
        <authorList>
            <person name="Graham S.W."/>
            <person name="Olmstead R.G."/>
        </authorList>
    </citation>
    <scope>NUCLEOTIDE SEQUENCE [GENOMIC DNA]</scope>
</reference>
<keyword id="KW-0150">Chloroplast</keyword>
<keyword id="KW-0472">Membrane</keyword>
<keyword id="KW-0602">Photosynthesis</keyword>
<keyword id="KW-0604">Photosystem II</keyword>
<keyword id="KW-0934">Plastid</keyword>
<keyword id="KW-0674">Reaction center</keyword>
<keyword id="KW-0793">Thylakoid</keyword>
<keyword id="KW-0812">Transmembrane</keyword>
<keyword id="KW-1133">Transmembrane helix</keyword>
<name>PSBL_GNEGN</name>
<proteinExistence type="inferred from homology"/>
<geneLocation type="chloroplast"/>
<sequence length="38" mass="4484">MTQTNPNEQSVELNRTSLYWGLLLIFVLAVLFSNYFFN</sequence>
<accession>Q9GFC2</accession>
<protein>
    <recommendedName>
        <fullName evidence="1">Photosystem II reaction center protein L</fullName>
        <shortName evidence="1">PSII-L</shortName>
    </recommendedName>
</protein>
<organism>
    <name type="scientific">Gnetum gnemon</name>
    <name type="common">Spanish joint-fir</name>
    <name type="synonym">Gnetum acutatum</name>
    <dbReference type="NCBI Taxonomy" id="3382"/>
    <lineage>
        <taxon>Eukaryota</taxon>
        <taxon>Viridiplantae</taxon>
        <taxon>Streptophyta</taxon>
        <taxon>Embryophyta</taxon>
        <taxon>Tracheophyta</taxon>
        <taxon>Spermatophyta</taxon>
        <taxon>Gnetopsida</taxon>
        <taxon>Gnetidae</taxon>
        <taxon>Gnetales</taxon>
        <taxon>Gnetaceae</taxon>
        <taxon>Gnetum</taxon>
    </lineage>
</organism>
<comment type="function">
    <text evidence="1">One of the components of the core complex of photosystem II (PSII). PSII is a light-driven water:plastoquinone oxidoreductase that uses light energy to abstract electrons from H(2)O, generating O(2) and a proton gradient subsequently used for ATP formation. It consists of a core antenna complex that captures photons, and an electron transfer chain that converts photonic excitation into a charge separation. This subunit is found at the monomer-monomer interface and is required for correct PSII assembly and/or dimerization.</text>
</comment>
<comment type="subunit">
    <text evidence="1">PSII is composed of 1 copy each of membrane proteins PsbA, PsbB, PsbC, PsbD, PsbE, PsbF, PsbH, PsbI, PsbJ, PsbK, PsbL, PsbM, PsbT, PsbX, PsbY, PsbZ, Psb30/Ycf12, at least 3 peripheral proteins of the oxygen-evolving complex and a large number of cofactors. It forms dimeric complexes.</text>
</comment>
<comment type="subcellular location">
    <subcellularLocation>
        <location evidence="1">Plastid</location>
        <location evidence="1">Chloroplast thylakoid membrane</location>
        <topology evidence="1">Single-pass membrane protein</topology>
    </subcellularLocation>
</comment>
<comment type="similarity">
    <text evidence="1">Belongs to the PsbL family.</text>
</comment>
<dbReference type="EMBL" id="AF123837">
    <property type="protein sequence ID" value="AAG26228.1"/>
    <property type="molecule type" value="Genomic_DNA"/>
</dbReference>
<dbReference type="RefSeq" id="YP_009117858.1">
    <property type="nucleotide sequence ID" value="NC_026301.1"/>
</dbReference>
<dbReference type="SMR" id="Q9GFC2"/>
<dbReference type="GeneID" id="22975675"/>
<dbReference type="GO" id="GO:0009535">
    <property type="term" value="C:chloroplast thylakoid membrane"/>
    <property type="evidence" value="ECO:0007669"/>
    <property type="project" value="UniProtKB-SubCell"/>
</dbReference>
<dbReference type="GO" id="GO:0009539">
    <property type="term" value="C:photosystem II reaction center"/>
    <property type="evidence" value="ECO:0007669"/>
    <property type="project" value="InterPro"/>
</dbReference>
<dbReference type="GO" id="GO:0015979">
    <property type="term" value="P:photosynthesis"/>
    <property type="evidence" value="ECO:0007669"/>
    <property type="project" value="UniProtKB-UniRule"/>
</dbReference>
<dbReference type="HAMAP" id="MF_01317">
    <property type="entry name" value="PSII_PsbL"/>
    <property type="match status" value="1"/>
</dbReference>
<dbReference type="InterPro" id="IPR003372">
    <property type="entry name" value="PSII_PsbL"/>
</dbReference>
<dbReference type="InterPro" id="IPR037266">
    <property type="entry name" value="PSII_PsbL_sf"/>
</dbReference>
<dbReference type="NCBIfam" id="NF001972">
    <property type="entry name" value="PRK00753.1"/>
    <property type="match status" value="1"/>
</dbReference>
<dbReference type="Pfam" id="PF02419">
    <property type="entry name" value="PsbL"/>
    <property type="match status" value="1"/>
</dbReference>
<dbReference type="SUPFAM" id="SSF161017">
    <property type="entry name" value="Photosystem II reaction center protein L, PsbL"/>
    <property type="match status" value="1"/>
</dbReference>
<evidence type="ECO:0000255" key="1">
    <source>
        <dbReference type="HAMAP-Rule" id="MF_01317"/>
    </source>
</evidence>